<proteinExistence type="inferred from homology"/>
<protein>
    <recommendedName>
        <fullName>Rhodopsin</fullName>
    </recommendedName>
</protein>
<sequence length="289" mass="32759">YLVSPAAYAALGAYMFLLILIGFPVNFLTLYVTLEHKKLRTPLNYILLNLAVADLFMVLGGFTTTMYTSMHGYFVLGRLGCNLEGFFATLGGEIALWSLVVLAIERWIVVCKPISKFRFTEDNAIMGLAFSWVMALACAVPPLVGWLRYIPEGMQCTCGVDYYTRAEGFDNESFVIYMFIVHFLIPLSVIFFCYGRLLCAVKEAAAAQQESETTQRAEKEVSRMVVIMVIGFLVCWLPYASVAWWIFCNQGSDFGPIFMTLPSFFAKRPAIYNPMIYICMNKQFRHCMI</sequence>
<comment type="function">
    <text evidence="1 2 3">Photoreceptor required for image-forming vision at low light intensity. While most salt water fish species use retinal as chromophore, most freshwater fish use 3-dehydroretinal, or a mixture of retinal and 3-dehydroretinal (By similarity). Light-induced isomerization of 11-cis to all-trans retinal triggers a conformational change that activates signaling via G-proteins. Subsequent receptor phosphorylation mediates displacement of the bound G-protein alpha subunit by arrestin and terminates signaling (By similarity).</text>
</comment>
<comment type="subcellular location">
    <subcellularLocation>
        <location evidence="2">Membrane</location>
        <topology evidence="2">Multi-pass membrane protein</topology>
    </subcellularLocation>
    <subcellularLocation>
        <location evidence="4">Cell projection</location>
        <location evidence="4">Cilium</location>
        <location evidence="4">Photoreceptor outer segment</location>
    </subcellularLocation>
    <text evidence="2">Synthesized in the inner segment (IS) of rod photoreceptor cells before vectorial transport to disk membranes in the rod outer segment (OS) photosensory cilia.</text>
</comment>
<comment type="PTM">
    <text evidence="1">Phosphorylated on some or all of the serine and threonine residues present in the C-terminal region.</text>
</comment>
<comment type="PTM">
    <text evidence="1">Contains one covalently linked retinal chromophore.</text>
</comment>
<comment type="similarity">
    <text evidence="6">Belongs to the G-protein coupled receptor 1 family. Opsin subfamily.</text>
</comment>
<reference key="1">
    <citation type="journal article" date="1997" name="Mol. Phylogenet. Evol.">
        <title>Molecular evolution of the cottoid fish endemic to Lake Baikal deduced from nuclear DNA evidence.</title>
        <authorList>
            <person name="Hunt D.M."/>
            <person name="Fitzgibbon J."/>
            <person name="Slobodyanyuk S.J."/>
            <person name="Bowmaker J.K."/>
            <person name="Dulai K.S."/>
        </authorList>
    </citation>
    <scope>NUCLEOTIDE SEQUENCE [GENOMIC DNA]</scope>
</reference>
<organism>
    <name type="scientific">Batrachocottus nikolskii</name>
    <name type="common">Fat sculpin</name>
    <name type="synonym">Cottus nikolskii</name>
    <dbReference type="NCBI Taxonomy" id="79686"/>
    <lineage>
        <taxon>Eukaryota</taxon>
        <taxon>Metazoa</taxon>
        <taxon>Chordata</taxon>
        <taxon>Craniata</taxon>
        <taxon>Vertebrata</taxon>
        <taxon>Euteleostomi</taxon>
        <taxon>Actinopterygii</taxon>
        <taxon>Neopterygii</taxon>
        <taxon>Teleostei</taxon>
        <taxon>Neoteleostei</taxon>
        <taxon>Acanthomorphata</taxon>
        <taxon>Eupercaria</taxon>
        <taxon>Perciformes</taxon>
        <taxon>Cottioidei</taxon>
        <taxon>Cottales</taxon>
        <taxon>Cottidae</taxon>
        <taxon>Batrachocottus</taxon>
    </lineage>
</organism>
<feature type="chain" id="PRO_0000197652" description="Rhodopsin">
    <location>
        <begin position="1" status="less than"/>
        <end position="289" status="greater than"/>
    </location>
</feature>
<feature type="topological domain" description="Extracellular" evidence="7">
    <location>
        <begin position="1" status="less than"/>
        <end position="7"/>
    </location>
</feature>
<feature type="transmembrane region" description="Helical; Name=1" evidence="1">
    <location>
        <begin position="8"/>
        <end position="32"/>
    </location>
</feature>
<feature type="topological domain" description="Cytoplasmic" evidence="7">
    <location>
        <begin position="33"/>
        <end position="44"/>
    </location>
</feature>
<feature type="transmembrane region" description="Helical; Name=2" evidence="1">
    <location>
        <begin position="45"/>
        <end position="67"/>
    </location>
</feature>
<feature type="topological domain" description="Extracellular" evidence="7">
    <location>
        <begin position="68"/>
        <end position="81"/>
    </location>
</feature>
<feature type="transmembrane region" description="Helical; Name=3" evidence="1">
    <location>
        <begin position="82"/>
        <end position="104"/>
    </location>
</feature>
<feature type="topological domain" description="Cytoplasmic" evidence="7">
    <location>
        <begin position="105"/>
        <end position="123"/>
    </location>
</feature>
<feature type="transmembrane region" description="Helical; Name=4" evidence="1">
    <location>
        <begin position="124"/>
        <end position="144"/>
    </location>
</feature>
<feature type="topological domain" description="Extracellular" evidence="7">
    <location>
        <begin position="145"/>
        <end position="173"/>
    </location>
</feature>
<feature type="transmembrane region" description="Helical; Name=5" evidence="1">
    <location>
        <begin position="174"/>
        <end position="195"/>
    </location>
</feature>
<feature type="topological domain" description="Cytoplasmic" evidence="7">
    <location>
        <begin position="196"/>
        <end position="223"/>
    </location>
</feature>
<feature type="transmembrane region" description="Helical; Name=6" evidence="1">
    <location>
        <begin position="224"/>
        <end position="245"/>
    </location>
</feature>
<feature type="topological domain" description="Extracellular" evidence="7">
    <location>
        <begin position="246"/>
        <end position="257"/>
    </location>
</feature>
<feature type="transmembrane region" description="Helical; Name=7" evidence="1">
    <location>
        <begin position="258"/>
        <end position="279"/>
    </location>
</feature>
<feature type="topological domain" description="Cytoplasmic" evidence="7">
    <location>
        <begin position="280"/>
        <end position="289" status="greater than"/>
    </location>
</feature>
<feature type="short sequence motif" description="'Ionic lock' involved in activated form stabilization" evidence="1">
    <location>
        <begin position="105"/>
        <end position="107"/>
    </location>
</feature>
<feature type="site" description="Plays an important role in the conformation switch to the active conformation" evidence="1">
    <location>
        <position position="84"/>
    </location>
</feature>
<feature type="modified residue" description="N6-(retinylidene)lysine" evidence="1">
    <location>
        <position position="267"/>
    </location>
</feature>
<feature type="glycosylation site" description="N-linked (GlcNAc...) asparagine" evidence="5">
    <location>
        <position position="171"/>
    </location>
</feature>
<feature type="disulfide bond" evidence="6">
    <location>
        <begin position="81"/>
        <end position="158"/>
    </location>
</feature>
<feature type="non-terminal residue">
    <location>
        <position position="1"/>
    </location>
</feature>
<feature type="non-terminal residue">
    <location>
        <position position="289"/>
    </location>
</feature>
<evidence type="ECO:0000250" key="1">
    <source>
        <dbReference type="UniProtKB" id="P02699"/>
    </source>
</evidence>
<evidence type="ECO:0000250" key="2">
    <source>
        <dbReference type="UniProtKB" id="P08100"/>
    </source>
</evidence>
<evidence type="ECO:0000250" key="3">
    <source>
        <dbReference type="UniProtKB" id="P32309"/>
    </source>
</evidence>
<evidence type="ECO:0000250" key="4">
    <source>
        <dbReference type="UniProtKB" id="P35359"/>
    </source>
</evidence>
<evidence type="ECO:0000255" key="5"/>
<evidence type="ECO:0000255" key="6">
    <source>
        <dbReference type="PROSITE-ProRule" id="PRU00521"/>
    </source>
</evidence>
<evidence type="ECO:0000305" key="7"/>
<gene>
    <name type="primary">rho</name>
</gene>
<dbReference type="EMBL" id="U97268">
    <property type="protein sequence ID" value="AAB61722.1"/>
    <property type="molecule type" value="Genomic_DNA"/>
</dbReference>
<dbReference type="SMR" id="O42301"/>
<dbReference type="GlyCosmos" id="O42301">
    <property type="glycosylation" value="1 site, No reported glycans"/>
</dbReference>
<dbReference type="GO" id="GO:0016020">
    <property type="term" value="C:membrane"/>
    <property type="evidence" value="ECO:0000250"/>
    <property type="project" value="UniProtKB"/>
</dbReference>
<dbReference type="GO" id="GO:0097381">
    <property type="term" value="C:photoreceptor disc membrane"/>
    <property type="evidence" value="ECO:0000250"/>
    <property type="project" value="UniProtKB"/>
</dbReference>
<dbReference type="GO" id="GO:0005886">
    <property type="term" value="C:plasma membrane"/>
    <property type="evidence" value="ECO:0000250"/>
    <property type="project" value="UniProtKB"/>
</dbReference>
<dbReference type="GO" id="GO:0005502">
    <property type="term" value="F:11-cis retinal binding"/>
    <property type="evidence" value="ECO:0000250"/>
    <property type="project" value="UniProtKB"/>
</dbReference>
<dbReference type="GO" id="GO:0008020">
    <property type="term" value="F:G protein-coupled photoreceptor activity"/>
    <property type="evidence" value="ECO:0000250"/>
    <property type="project" value="UniProtKB"/>
</dbReference>
<dbReference type="GO" id="GO:0016038">
    <property type="term" value="P:absorption of visible light"/>
    <property type="evidence" value="ECO:0000250"/>
    <property type="project" value="UniProtKB"/>
</dbReference>
<dbReference type="GO" id="GO:0016056">
    <property type="term" value="P:G protein-coupled opsin signaling pathway"/>
    <property type="evidence" value="ECO:0000250"/>
    <property type="project" value="UniProtKB"/>
</dbReference>
<dbReference type="GO" id="GO:0007601">
    <property type="term" value="P:visual perception"/>
    <property type="evidence" value="ECO:0007669"/>
    <property type="project" value="UniProtKB-KW"/>
</dbReference>
<dbReference type="FunFam" id="1.20.1070.10:FF:000357">
    <property type="entry name" value="Rhodopsin"/>
    <property type="match status" value="1"/>
</dbReference>
<dbReference type="Gene3D" id="1.20.1070.10">
    <property type="entry name" value="Rhodopsin 7-helix transmembrane proteins"/>
    <property type="match status" value="1"/>
</dbReference>
<dbReference type="InterPro" id="IPR050125">
    <property type="entry name" value="GPCR_opsins"/>
</dbReference>
<dbReference type="InterPro" id="IPR000276">
    <property type="entry name" value="GPCR_Rhodpsn"/>
</dbReference>
<dbReference type="InterPro" id="IPR017452">
    <property type="entry name" value="GPCR_Rhodpsn_7TM"/>
</dbReference>
<dbReference type="InterPro" id="IPR001760">
    <property type="entry name" value="Opsin"/>
</dbReference>
<dbReference type="InterPro" id="IPR027430">
    <property type="entry name" value="Retinal_BS"/>
</dbReference>
<dbReference type="InterPro" id="IPR000732">
    <property type="entry name" value="Rhodopsin"/>
</dbReference>
<dbReference type="PANTHER" id="PTHR24240">
    <property type="entry name" value="OPSIN"/>
    <property type="match status" value="1"/>
</dbReference>
<dbReference type="Pfam" id="PF00001">
    <property type="entry name" value="7tm_1"/>
    <property type="match status" value="1"/>
</dbReference>
<dbReference type="PRINTS" id="PR00237">
    <property type="entry name" value="GPCRRHODOPSN"/>
</dbReference>
<dbReference type="PRINTS" id="PR00238">
    <property type="entry name" value="OPSIN"/>
</dbReference>
<dbReference type="PRINTS" id="PR00579">
    <property type="entry name" value="RHODOPSIN"/>
</dbReference>
<dbReference type="SUPFAM" id="SSF81321">
    <property type="entry name" value="Family A G protein-coupled receptor-like"/>
    <property type="match status" value="1"/>
</dbReference>
<dbReference type="PROSITE" id="PS00237">
    <property type="entry name" value="G_PROTEIN_RECEP_F1_1"/>
    <property type="match status" value="1"/>
</dbReference>
<dbReference type="PROSITE" id="PS50262">
    <property type="entry name" value="G_PROTEIN_RECEP_F1_2"/>
    <property type="match status" value="1"/>
</dbReference>
<dbReference type="PROSITE" id="PS00238">
    <property type="entry name" value="OPSIN"/>
    <property type="match status" value="1"/>
</dbReference>
<name>OPSD_BATNI</name>
<keyword id="KW-0966">Cell projection</keyword>
<keyword id="KW-0157">Chromophore</keyword>
<keyword id="KW-1015">Disulfide bond</keyword>
<keyword id="KW-0297">G-protein coupled receptor</keyword>
<keyword id="KW-0325">Glycoprotein</keyword>
<keyword id="KW-0449">Lipoprotein</keyword>
<keyword id="KW-0472">Membrane</keyword>
<keyword id="KW-0564">Palmitate</keyword>
<keyword id="KW-0597">Phosphoprotein</keyword>
<keyword id="KW-0600">Photoreceptor protein</keyword>
<keyword id="KW-0675">Receptor</keyword>
<keyword id="KW-0681">Retinal protein</keyword>
<keyword id="KW-0716">Sensory transduction</keyword>
<keyword id="KW-0807">Transducer</keyword>
<keyword id="KW-0812">Transmembrane</keyword>
<keyword id="KW-1133">Transmembrane helix</keyword>
<keyword id="KW-0844">Vision</keyword>
<accession>O42301</accession>